<feature type="signal peptide" evidence="2">
    <location>
        <begin position="1"/>
        <end position="22"/>
    </location>
</feature>
<feature type="peptide" id="PRO_5007653880" description="Potassium channel toxin MeuTXKalpha3" evidence="5">
    <location>
        <begin position="23"/>
        <end position="59"/>
    </location>
</feature>
<feature type="site" description="Basic residue of the functional dyad" evidence="5">
    <location>
        <position position="49"/>
    </location>
</feature>
<feature type="site" description="Aromatic residue of the functional dyad" evidence="5">
    <location>
        <position position="58"/>
    </location>
</feature>
<feature type="modified residue" description="Proline amide" evidence="5">
    <location>
        <position position="59"/>
    </location>
</feature>
<feature type="disulfide bond" evidence="1">
    <location>
        <begin position="32"/>
        <end position="50"/>
    </location>
</feature>
<feature type="disulfide bond" evidence="1">
    <location>
        <begin position="37"/>
        <end position="55"/>
    </location>
</feature>
<feature type="disulfide bond" evidence="1">
    <location>
        <begin position="41"/>
        <end position="57"/>
    </location>
</feature>
<sequence>MKNYCGIITLFLAIISATGVFCVDFPNKGGKCDRKECRKTCKKLNYRGKCFPNYCRCFPG</sequence>
<reference key="1">
    <citation type="journal article" date="2011" name="Mol. Cell. Proteomics">
        <title>Molecular diversity and functional evolution of scorpion potassium channel toxins.</title>
        <authorList>
            <person name="Zhu S."/>
            <person name="Peigneur S."/>
            <person name="Gao B."/>
            <person name="Luo L."/>
            <person name="Jin D."/>
            <person name="Zhao Y."/>
            <person name="Tytgat J."/>
        </authorList>
    </citation>
    <scope>NUCLEOTIDE SEQUENCE [MRNA]</scope>
    <scope>PROBABLE AMIDATION AT PRO-59</scope>
    <source>
        <tissue>Venom gland</tissue>
    </source>
</reference>
<name>KAXU3_MESEU</name>
<protein>
    <recommendedName>
        <fullName evidence="3">Potassium channel toxin MeuTXKalpha3</fullName>
    </recommendedName>
    <alternativeName>
        <fullName evidence="4">Potassium channel toxin alpha-KTx</fullName>
    </alternativeName>
</protein>
<comment type="function">
    <text evidence="5">May block voltage-gated potassium channels (Kv).</text>
</comment>
<comment type="subcellular location">
    <subcellularLocation>
        <location evidence="5">Secreted</location>
    </subcellularLocation>
</comment>
<comment type="tissue specificity">
    <text evidence="5">Expressed by the venom gland.</text>
</comment>
<comment type="similarity">
    <text evidence="4">Belongs to the short scorpion toxin superfamily. Potassium channel inhibitor family.</text>
</comment>
<keyword id="KW-0027">Amidation</keyword>
<keyword id="KW-1015">Disulfide bond</keyword>
<keyword id="KW-0872">Ion channel impairing toxin</keyword>
<keyword id="KW-0528">Neurotoxin</keyword>
<keyword id="KW-0632">Potassium channel impairing toxin</keyword>
<keyword id="KW-0964">Secreted</keyword>
<keyword id="KW-0732">Signal</keyword>
<keyword id="KW-0800">Toxin</keyword>
<keyword id="KW-1220">Voltage-gated potassium channel impairing toxin</keyword>
<proteinExistence type="evidence at protein level"/>
<dbReference type="EMBL" id="EF442052">
    <property type="protein sequence ID" value="ABR20117.1"/>
    <property type="molecule type" value="mRNA"/>
</dbReference>
<dbReference type="EMBL" id="EF442053">
    <property type="protein sequence ID" value="ABR20118.1"/>
    <property type="molecule type" value="mRNA"/>
</dbReference>
<dbReference type="SMR" id="E4VP04"/>
<dbReference type="GO" id="GO:0005576">
    <property type="term" value="C:extracellular region"/>
    <property type="evidence" value="ECO:0007669"/>
    <property type="project" value="UniProtKB-SubCell"/>
</dbReference>
<dbReference type="GO" id="GO:0015459">
    <property type="term" value="F:potassium channel regulator activity"/>
    <property type="evidence" value="ECO:0007669"/>
    <property type="project" value="UniProtKB-KW"/>
</dbReference>
<dbReference type="GO" id="GO:0090729">
    <property type="term" value="F:toxin activity"/>
    <property type="evidence" value="ECO:0007669"/>
    <property type="project" value="UniProtKB-KW"/>
</dbReference>
<organism>
    <name type="scientific">Mesobuthus eupeus</name>
    <name type="common">Lesser Asian scorpion</name>
    <name type="synonym">Buthus eupeus</name>
    <dbReference type="NCBI Taxonomy" id="34648"/>
    <lineage>
        <taxon>Eukaryota</taxon>
        <taxon>Metazoa</taxon>
        <taxon>Ecdysozoa</taxon>
        <taxon>Arthropoda</taxon>
        <taxon>Chelicerata</taxon>
        <taxon>Arachnida</taxon>
        <taxon>Scorpiones</taxon>
        <taxon>Buthida</taxon>
        <taxon>Buthoidea</taxon>
        <taxon>Buthidae</taxon>
        <taxon>Mesobuthus</taxon>
    </lineage>
</organism>
<accession>E4VP04</accession>
<evidence type="ECO:0000250" key="1">
    <source>
        <dbReference type="UniProtKB" id="O46028"/>
    </source>
</evidence>
<evidence type="ECO:0000255" key="2"/>
<evidence type="ECO:0000303" key="3">
    <source>
    </source>
</evidence>
<evidence type="ECO:0000305" key="4"/>
<evidence type="ECO:0000305" key="5">
    <source>
    </source>
</evidence>